<sequence length="244" mass="26150">MIIPALDLINGQVVRLFQGDYGQVTEYKVDPAEQFKLYNQAGANWLHLVDLTGAKDTSARQLDLISQLLASTPANIQIGGGVRSEKDVSDLLEAGAQRVVIGSTAVKQPEMVKGWMEKYGPEHIVLALDVNIDKDGNRNVAISGWQEDSGVSIEALLDDFLTVGLKHVLCTDISRDGTLAGSNVELYVDLCAQYPQVQFQSSGGIGDLNDIAALKGSGVAGVIVGRALLDGKFTAEDAFQCWNS</sequence>
<proteinExistence type="inferred from homology"/>
<reference key="1">
    <citation type="journal article" date="2005" name="Science">
        <title>Life at depth: Photobacterium profundum genome sequence and expression analysis.</title>
        <authorList>
            <person name="Vezzi A."/>
            <person name="Campanaro S."/>
            <person name="D'Angelo M."/>
            <person name="Simonato F."/>
            <person name="Vitulo N."/>
            <person name="Lauro F.M."/>
            <person name="Cestaro A."/>
            <person name="Malacrida G."/>
            <person name="Simionati B."/>
            <person name="Cannata N."/>
            <person name="Romualdi C."/>
            <person name="Bartlett D.H."/>
            <person name="Valle G."/>
        </authorList>
    </citation>
    <scope>NUCLEOTIDE SEQUENCE [LARGE SCALE GENOMIC DNA]</scope>
    <source>
        <strain>ATCC BAA-1253 / SS9</strain>
    </source>
</reference>
<gene>
    <name type="primary">hisA</name>
    <name type="ordered locus">PBPRA1087</name>
</gene>
<name>HIS4_PHOPR</name>
<protein>
    <recommendedName>
        <fullName>1-(5-phosphoribosyl)-5-[(5-phosphoribosylamino)methylideneamino] imidazole-4-carboxamide isomerase</fullName>
        <ecNumber>5.3.1.16</ecNumber>
    </recommendedName>
    <alternativeName>
        <fullName>Phosphoribosylformimino-5-aminoimidazole carboxamide ribotide isomerase</fullName>
    </alternativeName>
</protein>
<dbReference type="EC" id="5.3.1.16"/>
<dbReference type="EMBL" id="CR378666">
    <property type="protein sequence ID" value="CAG19498.1"/>
    <property type="status" value="ALT_INIT"/>
    <property type="molecule type" value="Genomic_DNA"/>
</dbReference>
<dbReference type="RefSeq" id="WP_011217831.1">
    <property type="nucleotide sequence ID" value="NC_006370.1"/>
</dbReference>
<dbReference type="SMR" id="P62355"/>
<dbReference type="STRING" id="298386.PBPRA1087"/>
<dbReference type="KEGG" id="ppr:PBPRA1087"/>
<dbReference type="eggNOG" id="COG0106">
    <property type="taxonomic scope" value="Bacteria"/>
</dbReference>
<dbReference type="HOGENOM" id="CLU_048577_1_2_6"/>
<dbReference type="UniPathway" id="UPA00031">
    <property type="reaction ID" value="UER00009"/>
</dbReference>
<dbReference type="Proteomes" id="UP000000593">
    <property type="component" value="Chromosome 1"/>
</dbReference>
<dbReference type="GO" id="GO:0005737">
    <property type="term" value="C:cytoplasm"/>
    <property type="evidence" value="ECO:0007669"/>
    <property type="project" value="UniProtKB-SubCell"/>
</dbReference>
<dbReference type="GO" id="GO:0003949">
    <property type="term" value="F:1-(5-phosphoribosyl)-5-[(5-phosphoribosylamino)methylideneamino]imidazole-4-carboxamide isomerase activity"/>
    <property type="evidence" value="ECO:0007669"/>
    <property type="project" value="UniProtKB-UniRule"/>
</dbReference>
<dbReference type="GO" id="GO:0000105">
    <property type="term" value="P:L-histidine biosynthetic process"/>
    <property type="evidence" value="ECO:0007669"/>
    <property type="project" value="UniProtKB-UniRule"/>
</dbReference>
<dbReference type="GO" id="GO:0000162">
    <property type="term" value="P:L-tryptophan biosynthetic process"/>
    <property type="evidence" value="ECO:0007669"/>
    <property type="project" value="TreeGrafter"/>
</dbReference>
<dbReference type="CDD" id="cd04732">
    <property type="entry name" value="HisA"/>
    <property type="match status" value="1"/>
</dbReference>
<dbReference type="FunFam" id="3.20.20.70:FF:000009">
    <property type="entry name" value="1-(5-phosphoribosyl)-5-[(5-phosphoribosylamino)methylideneamino] imidazole-4-carboxamide isomerase"/>
    <property type="match status" value="1"/>
</dbReference>
<dbReference type="Gene3D" id="3.20.20.70">
    <property type="entry name" value="Aldolase class I"/>
    <property type="match status" value="1"/>
</dbReference>
<dbReference type="HAMAP" id="MF_01014">
    <property type="entry name" value="HisA"/>
    <property type="match status" value="1"/>
</dbReference>
<dbReference type="InterPro" id="IPR013785">
    <property type="entry name" value="Aldolase_TIM"/>
</dbReference>
<dbReference type="InterPro" id="IPR006062">
    <property type="entry name" value="His_biosynth"/>
</dbReference>
<dbReference type="InterPro" id="IPR006063">
    <property type="entry name" value="HisA_bact_arch"/>
</dbReference>
<dbReference type="InterPro" id="IPR044524">
    <property type="entry name" value="Isoase_HisA-like"/>
</dbReference>
<dbReference type="InterPro" id="IPR023016">
    <property type="entry name" value="Isoase_HisA-like_bact"/>
</dbReference>
<dbReference type="InterPro" id="IPR011060">
    <property type="entry name" value="RibuloseP-bd_barrel"/>
</dbReference>
<dbReference type="NCBIfam" id="TIGR00007">
    <property type="entry name" value="1-(5-phosphoribosyl)-5-[(5-phosphoribosylamino)methylideneamino]imidazole-4-carboxamide isomerase"/>
    <property type="match status" value="1"/>
</dbReference>
<dbReference type="PANTHER" id="PTHR43090">
    <property type="entry name" value="1-(5-PHOSPHORIBOSYL)-5-[(5-PHOSPHORIBOSYLAMINO)METHYLIDENEAMINO] IMIDAZOLE-4-CARBOXAMIDE ISOMERASE"/>
    <property type="match status" value="1"/>
</dbReference>
<dbReference type="PANTHER" id="PTHR43090:SF2">
    <property type="entry name" value="1-(5-PHOSPHORIBOSYL)-5-[(5-PHOSPHORIBOSYLAMINO)METHYLIDENEAMINO] IMIDAZOLE-4-CARBOXAMIDE ISOMERASE"/>
    <property type="match status" value="1"/>
</dbReference>
<dbReference type="Pfam" id="PF00977">
    <property type="entry name" value="His_biosynth"/>
    <property type="match status" value="1"/>
</dbReference>
<dbReference type="SUPFAM" id="SSF51366">
    <property type="entry name" value="Ribulose-phoshate binding barrel"/>
    <property type="match status" value="1"/>
</dbReference>
<accession>P62355</accession>
<organism>
    <name type="scientific">Photobacterium profundum (strain SS9)</name>
    <dbReference type="NCBI Taxonomy" id="298386"/>
    <lineage>
        <taxon>Bacteria</taxon>
        <taxon>Pseudomonadati</taxon>
        <taxon>Pseudomonadota</taxon>
        <taxon>Gammaproteobacteria</taxon>
        <taxon>Vibrionales</taxon>
        <taxon>Vibrionaceae</taxon>
        <taxon>Photobacterium</taxon>
    </lineage>
</organism>
<keyword id="KW-0028">Amino-acid biosynthesis</keyword>
<keyword id="KW-0963">Cytoplasm</keyword>
<keyword id="KW-0368">Histidine biosynthesis</keyword>
<keyword id="KW-0413">Isomerase</keyword>
<keyword id="KW-1185">Reference proteome</keyword>
<evidence type="ECO:0000250" key="1"/>
<evidence type="ECO:0000305" key="2"/>
<feature type="chain" id="PRO_0000142033" description="1-(5-phosphoribosyl)-5-[(5-phosphoribosylamino)methylideneamino] imidazole-4-carboxamide isomerase">
    <location>
        <begin position="1"/>
        <end position="244"/>
    </location>
</feature>
<feature type="active site" description="Proton acceptor" evidence="1">
    <location>
        <position position="7"/>
    </location>
</feature>
<feature type="active site" description="Proton donor" evidence="1">
    <location>
        <position position="129"/>
    </location>
</feature>
<comment type="catalytic activity">
    <reaction>
        <text>1-(5-phospho-beta-D-ribosyl)-5-[(5-phospho-beta-D-ribosylamino)methylideneamino]imidazole-4-carboxamide = 5-[(5-phospho-1-deoxy-D-ribulos-1-ylimino)methylamino]-1-(5-phospho-beta-D-ribosyl)imidazole-4-carboxamide</text>
        <dbReference type="Rhea" id="RHEA:15469"/>
        <dbReference type="ChEBI" id="CHEBI:58435"/>
        <dbReference type="ChEBI" id="CHEBI:58525"/>
        <dbReference type="EC" id="5.3.1.16"/>
    </reaction>
</comment>
<comment type="pathway">
    <text>Amino-acid biosynthesis; L-histidine biosynthesis; L-histidine from 5-phospho-alpha-D-ribose 1-diphosphate: step 4/9.</text>
</comment>
<comment type="subcellular location">
    <subcellularLocation>
        <location evidence="1">Cytoplasm</location>
    </subcellularLocation>
</comment>
<comment type="similarity">
    <text evidence="2">Belongs to the HisA/HisF family.</text>
</comment>
<comment type="sequence caution" evidence="2">
    <conflict type="erroneous initiation">
        <sequence resource="EMBL-CDS" id="CAG19498"/>
    </conflict>
</comment>